<proteinExistence type="evidence at protein level"/>
<comment type="function">
    <text>May be involved in transcriptional regulation.</text>
</comment>
<comment type="interaction">
    <interactant intactId="EBI-21734356">
        <id>Q96N20</id>
    </interactant>
    <interactant intactId="EBI-12023934">
        <id>Q5MJ10</id>
        <label>SPANXN2</label>
    </interactant>
    <organismsDiffer>false</organismsDiffer>
    <experiments>3</experiments>
</comment>
<comment type="subcellular location">
    <subcellularLocation>
        <location evidence="4">Nucleus</location>
    </subcellularLocation>
</comment>
<comment type="similarity">
    <text evidence="4">Belongs to the krueppel C2H2-type zinc-finger protein family.</text>
</comment>
<name>ZN75A_HUMAN</name>
<accession>Q96N20</accession>
<accession>Q0VDI8</accession>
<accession>Q92669</accession>
<protein>
    <recommendedName>
        <fullName>Zinc finger protein 75A</fullName>
    </recommendedName>
</protein>
<feature type="chain" id="PRO_0000047385" description="Zinc finger protein 75A">
    <location>
        <begin position="1"/>
        <end position="296"/>
    </location>
</feature>
<feature type="domain" description="KRAB" evidence="2">
    <location>
        <begin position="1"/>
        <end position="66"/>
    </location>
</feature>
<feature type="zinc finger region" description="C2H2-type 1" evidence="1">
    <location>
        <begin position="161"/>
        <end position="183"/>
    </location>
</feature>
<feature type="zinc finger region" description="C2H2-type 2" evidence="1">
    <location>
        <begin position="189"/>
        <end position="211"/>
    </location>
</feature>
<feature type="zinc finger region" description="C2H2-type 3" evidence="1">
    <location>
        <begin position="217"/>
        <end position="239"/>
    </location>
</feature>
<feature type="zinc finger region" description="C2H2-type 4" evidence="1">
    <location>
        <begin position="245"/>
        <end position="267"/>
    </location>
</feature>
<feature type="zinc finger region" description="C2H2-type 5" evidence="1">
    <location>
        <begin position="273"/>
        <end position="295"/>
    </location>
</feature>
<feature type="sequence variant" id="VAR_033545" description="In dbSNP:rs17611866.">
    <original>V</original>
    <variation>A</variation>
    <location>
        <position position="84"/>
    </location>
</feature>
<feature type="sequence variant" id="VAR_035570" description="In a breast cancer sample; somatic mutation." evidence="3">
    <original>Q</original>
    <variation>E</variation>
    <location>
        <position position="228"/>
    </location>
</feature>
<dbReference type="EMBL" id="AK056091">
    <property type="protein sequence ID" value="BAB71092.1"/>
    <property type="molecule type" value="mRNA"/>
</dbReference>
<dbReference type="EMBL" id="BC119652">
    <property type="protein sequence ID" value="AAI19653.1"/>
    <property type="molecule type" value="mRNA"/>
</dbReference>
<dbReference type="EMBL" id="BC119653">
    <property type="protein sequence ID" value="AAI19654.1"/>
    <property type="molecule type" value="mRNA"/>
</dbReference>
<dbReference type="EMBL" id="X91826">
    <property type="protein sequence ID" value="CAA62935.1"/>
    <property type="molecule type" value="Genomic_DNA"/>
</dbReference>
<dbReference type="CCDS" id="CCDS10501.1"/>
<dbReference type="RefSeq" id="NP_001289038.1">
    <property type="nucleotide sequence ID" value="NM_001302109.1"/>
</dbReference>
<dbReference type="RefSeq" id="NP_694573.1">
    <property type="nucleotide sequence ID" value="NM_153028.4"/>
</dbReference>
<dbReference type="RefSeq" id="XP_011520949.1">
    <property type="nucleotide sequence ID" value="XM_011522647.3"/>
</dbReference>
<dbReference type="RefSeq" id="XP_016879131.1">
    <property type="nucleotide sequence ID" value="XM_017023642.1"/>
</dbReference>
<dbReference type="RefSeq" id="XP_047290545.1">
    <property type="nucleotide sequence ID" value="XM_047434589.1"/>
</dbReference>
<dbReference type="RefSeq" id="XP_047290546.1">
    <property type="nucleotide sequence ID" value="XM_047434590.1"/>
</dbReference>
<dbReference type="RefSeq" id="XP_047290547.1">
    <property type="nucleotide sequence ID" value="XM_047434591.1"/>
</dbReference>
<dbReference type="RefSeq" id="XP_054169816.1">
    <property type="nucleotide sequence ID" value="XM_054313841.1"/>
</dbReference>
<dbReference type="RefSeq" id="XP_054169817.1">
    <property type="nucleotide sequence ID" value="XM_054313842.1"/>
</dbReference>
<dbReference type="RefSeq" id="XP_054169818.1">
    <property type="nucleotide sequence ID" value="XM_054313843.1"/>
</dbReference>
<dbReference type="RefSeq" id="XP_054169824.1">
    <property type="nucleotide sequence ID" value="XM_054313849.1"/>
</dbReference>
<dbReference type="SMR" id="Q96N20"/>
<dbReference type="BioGRID" id="113446">
    <property type="interactions" value="8"/>
</dbReference>
<dbReference type="FunCoup" id="Q96N20">
    <property type="interactions" value="69"/>
</dbReference>
<dbReference type="IntAct" id="Q96N20">
    <property type="interactions" value="7"/>
</dbReference>
<dbReference type="STRING" id="9606.ENSP00000459566"/>
<dbReference type="iPTMnet" id="Q96N20"/>
<dbReference type="PhosphoSitePlus" id="Q96N20"/>
<dbReference type="BioMuta" id="ZNF75A"/>
<dbReference type="DMDM" id="68566224"/>
<dbReference type="jPOST" id="Q96N20"/>
<dbReference type="MassIVE" id="Q96N20"/>
<dbReference type="PaxDb" id="9606-ENSP00000459566"/>
<dbReference type="PeptideAtlas" id="Q96N20"/>
<dbReference type="Antibodypedia" id="816">
    <property type="antibodies" value="121 antibodies from 19 providers"/>
</dbReference>
<dbReference type="DNASU" id="7627"/>
<dbReference type="Ensembl" id="ENST00000574298.6">
    <property type="protein sequence ID" value="ENSP00000459566.1"/>
    <property type="gene ID" value="ENSG00000162086.16"/>
</dbReference>
<dbReference type="Ensembl" id="ENST00000617839.1">
    <property type="protein sequence ID" value="ENSP00000482769.1"/>
    <property type="gene ID" value="ENSG00000162086.16"/>
</dbReference>
<dbReference type="GeneID" id="7627"/>
<dbReference type="KEGG" id="hsa:7627"/>
<dbReference type="UCSC" id="uc002cut.5">
    <property type="organism name" value="human"/>
</dbReference>
<dbReference type="AGR" id="HGNC:13146"/>
<dbReference type="CTD" id="7627"/>
<dbReference type="DisGeNET" id="7627"/>
<dbReference type="GeneCards" id="ZNF75A"/>
<dbReference type="HGNC" id="HGNC:13146">
    <property type="gene designation" value="ZNF75A"/>
</dbReference>
<dbReference type="HPA" id="ENSG00000162086">
    <property type="expression patterns" value="Low tissue specificity"/>
</dbReference>
<dbReference type="MIM" id="601473">
    <property type="type" value="gene"/>
</dbReference>
<dbReference type="neXtProt" id="NX_Q96N20"/>
<dbReference type="OpenTargets" id="ENSG00000162086"/>
<dbReference type="PharmGKB" id="PA37720"/>
<dbReference type="VEuPathDB" id="HostDB:ENSG00000162086"/>
<dbReference type="eggNOG" id="KOG1721">
    <property type="taxonomic scope" value="Eukaryota"/>
</dbReference>
<dbReference type="GeneTree" id="ENSGT00940000162456"/>
<dbReference type="HOGENOM" id="CLU_002678_0_7_1"/>
<dbReference type="InParanoid" id="Q96N20"/>
<dbReference type="OMA" id="HLQRESC"/>
<dbReference type="OrthoDB" id="6077919at2759"/>
<dbReference type="PAN-GO" id="Q96N20">
    <property type="GO annotations" value="3 GO annotations based on evolutionary models"/>
</dbReference>
<dbReference type="PhylomeDB" id="Q96N20"/>
<dbReference type="TreeFam" id="TF340832"/>
<dbReference type="PathwayCommons" id="Q96N20"/>
<dbReference type="Reactome" id="R-HSA-212436">
    <property type="pathway name" value="Generic Transcription Pathway"/>
</dbReference>
<dbReference type="SignaLink" id="Q96N20"/>
<dbReference type="BioGRID-ORCS" id="7627">
    <property type="hits" value="10 hits in 1169 CRISPR screens"/>
</dbReference>
<dbReference type="ChiTaRS" id="ZNF75A">
    <property type="organism name" value="human"/>
</dbReference>
<dbReference type="GenomeRNAi" id="7627"/>
<dbReference type="Pharos" id="Q96N20">
    <property type="development level" value="Tdark"/>
</dbReference>
<dbReference type="PRO" id="PR:Q96N20"/>
<dbReference type="Proteomes" id="UP000005640">
    <property type="component" value="Chromosome 16"/>
</dbReference>
<dbReference type="RNAct" id="Q96N20">
    <property type="molecule type" value="protein"/>
</dbReference>
<dbReference type="Bgee" id="ENSG00000162086">
    <property type="expression patterns" value="Expressed in oviduct epithelium and 188 other cell types or tissues"/>
</dbReference>
<dbReference type="ExpressionAtlas" id="Q96N20">
    <property type="expression patterns" value="baseline and differential"/>
</dbReference>
<dbReference type="GO" id="GO:0005634">
    <property type="term" value="C:nucleus"/>
    <property type="evidence" value="ECO:0000318"/>
    <property type="project" value="GO_Central"/>
</dbReference>
<dbReference type="GO" id="GO:0000981">
    <property type="term" value="F:DNA-binding transcription factor activity, RNA polymerase II-specific"/>
    <property type="evidence" value="ECO:0000318"/>
    <property type="project" value="GO_Central"/>
</dbReference>
<dbReference type="GO" id="GO:0000977">
    <property type="term" value="F:RNA polymerase II transcription regulatory region sequence-specific DNA binding"/>
    <property type="evidence" value="ECO:0000318"/>
    <property type="project" value="GO_Central"/>
</dbReference>
<dbReference type="GO" id="GO:1990837">
    <property type="term" value="F:sequence-specific double-stranded DNA binding"/>
    <property type="evidence" value="ECO:0000314"/>
    <property type="project" value="ARUK-UCL"/>
</dbReference>
<dbReference type="GO" id="GO:0008270">
    <property type="term" value="F:zinc ion binding"/>
    <property type="evidence" value="ECO:0007669"/>
    <property type="project" value="UniProtKB-KW"/>
</dbReference>
<dbReference type="GO" id="GO:0006357">
    <property type="term" value="P:regulation of transcription by RNA polymerase II"/>
    <property type="evidence" value="ECO:0000318"/>
    <property type="project" value="GO_Central"/>
</dbReference>
<dbReference type="CDD" id="cd07765">
    <property type="entry name" value="KRAB_A-box"/>
    <property type="match status" value="1"/>
</dbReference>
<dbReference type="FunFam" id="3.30.160.60:FF:000720">
    <property type="entry name" value="zinc finger protein 18 isoform X2"/>
    <property type="match status" value="1"/>
</dbReference>
<dbReference type="FunFam" id="3.30.160.60:FF:001005">
    <property type="entry name" value="Zinc finger protein 75A"/>
    <property type="match status" value="1"/>
</dbReference>
<dbReference type="FunFam" id="3.30.160.60:FF:001261">
    <property type="entry name" value="Zinc finger protein 75a"/>
    <property type="match status" value="1"/>
</dbReference>
<dbReference type="FunFam" id="3.30.160.60:FF:001549">
    <property type="entry name" value="Zinc finger protein 75a"/>
    <property type="match status" value="1"/>
</dbReference>
<dbReference type="FunFam" id="3.30.160.60:FF:001340">
    <property type="entry name" value="zinc finger protein 75D isoform X1"/>
    <property type="match status" value="1"/>
</dbReference>
<dbReference type="Gene3D" id="6.10.140.140">
    <property type="match status" value="1"/>
</dbReference>
<dbReference type="Gene3D" id="3.30.160.60">
    <property type="entry name" value="Classic Zinc Finger"/>
    <property type="match status" value="5"/>
</dbReference>
<dbReference type="InterPro" id="IPR050752">
    <property type="entry name" value="C2H2-ZF_domain"/>
</dbReference>
<dbReference type="InterPro" id="IPR001909">
    <property type="entry name" value="KRAB"/>
</dbReference>
<dbReference type="InterPro" id="IPR036051">
    <property type="entry name" value="KRAB_dom_sf"/>
</dbReference>
<dbReference type="InterPro" id="IPR036236">
    <property type="entry name" value="Znf_C2H2_sf"/>
</dbReference>
<dbReference type="InterPro" id="IPR013087">
    <property type="entry name" value="Znf_C2H2_type"/>
</dbReference>
<dbReference type="PANTHER" id="PTHR24384">
    <property type="entry name" value="FINGER PUTATIVE TRANSCRIPTION FACTOR FAMILY-RELATED"/>
    <property type="match status" value="1"/>
</dbReference>
<dbReference type="PANTHER" id="PTHR24384:SF218">
    <property type="entry name" value="ZINC FINGER PROTEIN 502"/>
    <property type="match status" value="1"/>
</dbReference>
<dbReference type="Pfam" id="PF01352">
    <property type="entry name" value="KRAB"/>
    <property type="match status" value="1"/>
</dbReference>
<dbReference type="Pfam" id="PF00096">
    <property type="entry name" value="zf-C2H2"/>
    <property type="match status" value="5"/>
</dbReference>
<dbReference type="SMART" id="SM00349">
    <property type="entry name" value="KRAB"/>
    <property type="match status" value="1"/>
</dbReference>
<dbReference type="SMART" id="SM00355">
    <property type="entry name" value="ZnF_C2H2"/>
    <property type="match status" value="5"/>
</dbReference>
<dbReference type="SUPFAM" id="SSF57667">
    <property type="entry name" value="beta-beta-alpha zinc fingers"/>
    <property type="match status" value="3"/>
</dbReference>
<dbReference type="SUPFAM" id="SSF109640">
    <property type="entry name" value="KRAB domain (Kruppel-associated box)"/>
    <property type="match status" value="1"/>
</dbReference>
<dbReference type="PROSITE" id="PS50805">
    <property type="entry name" value="KRAB"/>
    <property type="match status" value="1"/>
</dbReference>
<dbReference type="PROSITE" id="PS00028">
    <property type="entry name" value="ZINC_FINGER_C2H2_1"/>
    <property type="match status" value="5"/>
</dbReference>
<dbReference type="PROSITE" id="PS50157">
    <property type="entry name" value="ZINC_FINGER_C2H2_2"/>
    <property type="match status" value="5"/>
</dbReference>
<keyword id="KW-0238">DNA-binding</keyword>
<keyword id="KW-0479">Metal-binding</keyword>
<keyword id="KW-0539">Nucleus</keyword>
<keyword id="KW-1267">Proteomics identification</keyword>
<keyword id="KW-1185">Reference proteome</keyword>
<keyword id="KW-0677">Repeat</keyword>
<keyword id="KW-0804">Transcription</keyword>
<keyword id="KW-0805">Transcription regulation</keyword>
<keyword id="KW-0862">Zinc</keyword>
<keyword id="KW-0863">Zinc-finger</keyword>
<organism>
    <name type="scientific">Homo sapiens</name>
    <name type="common">Human</name>
    <dbReference type="NCBI Taxonomy" id="9606"/>
    <lineage>
        <taxon>Eukaryota</taxon>
        <taxon>Metazoa</taxon>
        <taxon>Chordata</taxon>
        <taxon>Craniata</taxon>
        <taxon>Vertebrata</taxon>
        <taxon>Euteleostomi</taxon>
        <taxon>Mammalia</taxon>
        <taxon>Eutheria</taxon>
        <taxon>Euarchontoglires</taxon>
        <taxon>Primates</taxon>
        <taxon>Haplorrhini</taxon>
        <taxon>Catarrhini</taxon>
        <taxon>Hominidae</taxon>
        <taxon>Homo</taxon>
    </lineage>
</organism>
<sequence length="296" mass="34694">MYFSQEEWELLDPTQKALYNDVMQENYETVISLALFVLPKPKVISCLEQGEEPWVQVSPEFKDSAGKSPTGLKLKNDTENHQPVSLSDLEIQASAGVISKKAKVKVPQKTAGKENHFDMHRVGKWHQDFPVKKRKKLSTWKQELLKLMDRHKKDCAREKPFKCQECGKTFRVSSDLIKHQRIHTEEKPYKCQQCDKRFRWSSDLNKHLTTHQGIKPYKCSWCGKSFSQNTNLHTHQRTHTGEKPFTCHECGKKFSQNSHLIKHRRTHTGEQPYTCSICRRNFSRRSSLLRHQKLHL</sequence>
<reference key="1">
    <citation type="journal article" date="2004" name="Nat. Genet.">
        <title>Complete sequencing and characterization of 21,243 full-length human cDNAs.</title>
        <authorList>
            <person name="Ota T."/>
            <person name="Suzuki Y."/>
            <person name="Nishikawa T."/>
            <person name="Otsuki T."/>
            <person name="Sugiyama T."/>
            <person name="Irie R."/>
            <person name="Wakamatsu A."/>
            <person name="Hayashi K."/>
            <person name="Sato H."/>
            <person name="Nagai K."/>
            <person name="Kimura K."/>
            <person name="Makita H."/>
            <person name="Sekine M."/>
            <person name="Obayashi M."/>
            <person name="Nishi T."/>
            <person name="Shibahara T."/>
            <person name="Tanaka T."/>
            <person name="Ishii S."/>
            <person name="Yamamoto J."/>
            <person name="Saito K."/>
            <person name="Kawai Y."/>
            <person name="Isono Y."/>
            <person name="Nakamura Y."/>
            <person name="Nagahari K."/>
            <person name="Murakami K."/>
            <person name="Yasuda T."/>
            <person name="Iwayanagi T."/>
            <person name="Wagatsuma M."/>
            <person name="Shiratori A."/>
            <person name="Sudo H."/>
            <person name="Hosoiri T."/>
            <person name="Kaku Y."/>
            <person name="Kodaira H."/>
            <person name="Kondo H."/>
            <person name="Sugawara M."/>
            <person name="Takahashi M."/>
            <person name="Kanda K."/>
            <person name="Yokoi T."/>
            <person name="Furuya T."/>
            <person name="Kikkawa E."/>
            <person name="Omura Y."/>
            <person name="Abe K."/>
            <person name="Kamihara K."/>
            <person name="Katsuta N."/>
            <person name="Sato K."/>
            <person name="Tanikawa M."/>
            <person name="Yamazaki M."/>
            <person name="Ninomiya K."/>
            <person name="Ishibashi T."/>
            <person name="Yamashita H."/>
            <person name="Murakawa K."/>
            <person name="Fujimori K."/>
            <person name="Tanai H."/>
            <person name="Kimata M."/>
            <person name="Watanabe M."/>
            <person name="Hiraoka S."/>
            <person name="Chiba Y."/>
            <person name="Ishida S."/>
            <person name="Ono Y."/>
            <person name="Takiguchi S."/>
            <person name="Watanabe S."/>
            <person name="Yosida M."/>
            <person name="Hotuta T."/>
            <person name="Kusano J."/>
            <person name="Kanehori K."/>
            <person name="Takahashi-Fujii A."/>
            <person name="Hara H."/>
            <person name="Tanase T.-O."/>
            <person name="Nomura Y."/>
            <person name="Togiya S."/>
            <person name="Komai F."/>
            <person name="Hara R."/>
            <person name="Takeuchi K."/>
            <person name="Arita M."/>
            <person name="Imose N."/>
            <person name="Musashino K."/>
            <person name="Yuuki H."/>
            <person name="Oshima A."/>
            <person name="Sasaki N."/>
            <person name="Aotsuka S."/>
            <person name="Yoshikawa Y."/>
            <person name="Matsunawa H."/>
            <person name="Ichihara T."/>
            <person name="Shiohata N."/>
            <person name="Sano S."/>
            <person name="Moriya S."/>
            <person name="Momiyama H."/>
            <person name="Satoh N."/>
            <person name="Takami S."/>
            <person name="Terashima Y."/>
            <person name="Suzuki O."/>
            <person name="Nakagawa S."/>
            <person name="Senoh A."/>
            <person name="Mizoguchi H."/>
            <person name="Goto Y."/>
            <person name="Shimizu F."/>
            <person name="Wakebe H."/>
            <person name="Hishigaki H."/>
            <person name="Watanabe T."/>
            <person name="Sugiyama A."/>
            <person name="Takemoto M."/>
            <person name="Kawakami B."/>
            <person name="Yamazaki M."/>
            <person name="Watanabe K."/>
            <person name="Kumagai A."/>
            <person name="Itakura S."/>
            <person name="Fukuzumi Y."/>
            <person name="Fujimori Y."/>
            <person name="Komiyama M."/>
            <person name="Tashiro H."/>
            <person name="Tanigami A."/>
            <person name="Fujiwara T."/>
            <person name="Ono T."/>
            <person name="Yamada K."/>
            <person name="Fujii Y."/>
            <person name="Ozaki K."/>
            <person name="Hirao M."/>
            <person name="Ohmori Y."/>
            <person name="Kawabata A."/>
            <person name="Hikiji T."/>
            <person name="Kobatake N."/>
            <person name="Inagaki H."/>
            <person name="Ikema Y."/>
            <person name="Okamoto S."/>
            <person name="Okitani R."/>
            <person name="Kawakami T."/>
            <person name="Noguchi S."/>
            <person name="Itoh T."/>
            <person name="Shigeta K."/>
            <person name="Senba T."/>
            <person name="Matsumura K."/>
            <person name="Nakajima Y."/>
            <person name="Mizuno T."/>
            <person name="Morinaga M."/>
            <person name="Sasaki M."/>
            <person name="Togashi T."/>
            <person name="Oyama M."/>
            <person name="Hata H."/>
            <person name="Watanabe M."/>
            <person name="Komatsu T."/>
            <person name="Mizushima-Sugano J."/>
            <person name="Satoh T."/>
            <person name="Shirai Y."/>
            <person name="Takahashi Y."/>
            <person name="Nakagawa K."/>
            <person name="Okumura K."/>
            <person name="Nagase T."/>
            <person name="Nomura N."/>
            <person name="Kikuchi H."/>
            <person name="Masuho Y."/>
            <person name="Yamashita R."/>
            <person name="Nakai K."/>
            <person name="Yada T."/>
            <person name="Nakamura Y."/>
            <person name="Ohara O."/>
            <person name="Isogai T."/>
            <person name="Sugano S."/>
        </authorList>
    </citation>
    <scope>NUCLEOTIDE SEQUENCE [LARGE SCALE MRNA]</scope>
    <source>
        <tissue>Teratocarcinoma</tissue>
    </source>
</reference>
<reference key="2">
    <citation type="journal article" date="2004" name="Genome Res.">
        <title>The status, quality, and expansion of the NIH full-length cDNA project: the Mammalian Gene Collection (MGC).</title>
        <authorList>
            <consortium name="The MGC Project Team"/>
        </authorList>
    </citation>
    <scope>NUCLEOTIDE SEQUENCE [LARGE SCALE MRNA]</scope>
</reference>
<reference key="3">
    <citation type="journal article" date="1996" name="Genomics">
        <title>The ZNF75 zinc finger gene subfamily: isolation and mapping of the four members in humans and great apes.</title>
        <authorList>
            <person name="Villa A."/>
            <person name="Strina D."/>
            <person name="Frattini A."/>
            <person name="Faranda S."/>
            <person name="Macchi P."/>
            <person name="Finelli P."/>
            <person name="Bozzi F."/>
            <person name="Susani L."/>
            <person name="Archidiacono N."/>
            <person name="Rocchi M."/>
            <person name="Vezzoni P."/>
        </authorList>
    </citation>
    <scope>NUCLEOTIDE SEQUENCE [GENOMIC DNA] OF 202-291</scope>
    <source>
        <tissue>Peripheral blood</tissue>
    </source>
</reference>
<reference key="4">
    <citation type="journal article" date="2006" name="Science">
        <title>The consensus coding sequences of human breast and colorectal cancers.</title>
        <authorList>
            <person name="Sjoeblom T."/>
            <person name="Jones S."/>
            <person name="Wood L.D."/>
            <person name="Parsons D.W."/>
            <person name="Lin J."/>
            <person name="Barber T.D."/>
            <person name="Mandelker D."/>
            <person name="Leary R.J."/>
            <person name="Ptak J."/>
            <person name="Silliman N."/>
            <person name="Szabo S."/>
            <person name="Buckhaults P."/>
            <person name="Farrell C."/>
            <person name="Meeh P."/>
            <person name="Markowitz S.D."/>
            <person name="Willis J."/>
            <person name="Dawson D."/>
            <person name="Willson J.K.V."/>
            <person name="Gazdar A.F."/>
            <person name="Hartigan J."/>
            <person name="Wu L."/>
            <person name="Liu C."/>
            <person name="Parmigiani G."/>
            <person name="Park B.H."/>
            <person name="Bachman K.E."/>
            <person name="Papadopoulos N."/>
            <person name="Vogelstein B."/>
            <person name="Kinzler K.W."/>
            <person name="Velculescu V.E."/>
        </authorList>
    </citation>
    <scope>VARIANT [LARGE SCALE ANALYSIS] GLU-228</scope>
</reference>
<evidence type="ECO:0000255" key="1">
    <source>
        <dbReference type="PROSITE-ProRule" id="PRU00042"/>
    </source>
</evidence>
<evidence type="ECO:0000255" key="2">
    <source>
        <dbReference type="PROSITE-ProRule" id="PRU00119"/>
    </source>
</evidence>
<evidence type="ECO:0000269" key="3">
    <source>
    </source>
</evidence>
<evidence type="ECO:0000305" key="4"/>
<gene>
    <name type="primary">ZNF75A</name>
</gene>